<comment type="function">
    <text evidence="1">Possesses gelatinolytic activity.</text>
</comment>
<comment type="catalytic activity">
    <reaction>
        <text>Digestion of native collagen in the triple helical region at Xaa-|-Gly bonds. With synthetic peptides, a preference is shown for Gly at P3 and P1', Pro and Ala at P2 and P2', and hydroxyproline, Ala or Arg at P3'.</text>
        <dbReference type="EC" id="3.4.24.3"/>
    </reaction>
</comment>
<comment type="cofactor">
    <cofactor evidence="1">
        <name>Zn(2+)</name>
        <dbReference type="ChEBI" id="CHEBI:29105"/>
    </cofactor>
    <text evidence="1">Binds 1 zinc ion.</text>
</comment>
<comment type="subcellular location">
    <subcellularLocation>
        <location evidence="1">Secreted</location>
    </subcellularLocation>
</comment>
<comment type="similarity">
    <text evidence="5">Belongs to the peptidase M9A family.</text>
</comment>
<sequence length="807" mass="90009">MSHLLPFPRRRLALACLLASISGASFGQTQCDVAQLQQSPDLATAISSADYACYSGWFSASSDTLNNIYSEASLSRVQVALHQAVQTYQGEAEQARAIENLGEYVRAAYYVRYNAGNVAAFSDLLGQQFAHTINAFLANPHALDQGREQVGAMKSLTLMVDNIKQLPLTMDAMMLALQQFNPETAKNTQWVDGLNNLFRSMAGHIANDAFYRYLASNTQHIDMLEKFANDNAWALDTDADFLVFNALRETGRLIASPDKATKQKAVQVMQRVMARYPLGSEHDKLWLAAVEMLSYFAPEALNGLDLPQAKRDLAARVLPNRHECQGPAIIRSQDLTPEQAAKACDVLAAKEADFHQVANTGMQPVADDHNQRVEVAVFANNDSYVDYSAFLFGNTTDNGGQYLEGNPADEHNTARFVAYRYANGEELSILNLEHEYTHYLDARFNQYGSFSDNLAHGYVVWWLEGFAEYMHYKQGYQAAIELIAQGKMSLSQVFATSYSHDTNRIYRWGYLAVRFMLENHPQEVEGLLALSRSGQFEQWAQQVQTLGQQYDGEFARWLDGLEVTPENPDTDPDTPTEPSDGVTQLQANQSITLSGKAYSEKLFYVDVPANTTHFSVAIEGDGDADLYMSYNQVAHYYDFEVSKFVDGSNEEIQFAADASGYVKPGRYYLSVTGRGRYQAVNLTATIDTAAPTPPTQEQDDLAPVMLQSGQAQHLTVHQQRYAAVYVPEGVSEVRIWLSDLTSSDSQGNVNLYASREHWPTPEQHQFASRYAGSNQYLAIPVEQAGYLHFSLNAPQQGDDVEMVVYFH</sequence>
<protein>
    <recommendedName>
        <fullName>Microbial collagenase</fullName>
        <ecNumber>3.4.24.3</ecNumber>
    </recommendedName>
</protein>
<reference key="1">
    <citation type="submission" date="2002-12" db="EMBL/GenBank/DDBJ databases">
        <title>Complete genome sequence of Vibrio vulnificus CMCP6.</title>
        <authorList>
            <person name="Rhee J.H."/>
            <person name="Kim S.Y."/>
            <person name="Chung S.S."/>
            <person name="Kim J.J."/>
            <person name="Moon Y.H."/>
            <person name="Jeong H."/>
            <person name="Choy H.E."/>
        </authorList>
    </citation>
    <scope>NUCLEOTIDE SEQUENCE [LARGE SCALE GENOMIC DNA]</scope>
    <source>
        <strain>CMCP6</strain>
    </source>
</reference>
<evidence type="ECO:0000250" key="1"/>
<evidence type="ECO:0000255" key="2"/>
<evidence type="ECO:0000255" key="3">
    <source>
        <dbReference type="PROSITE-ProRule" id="PRU10095"/>
    </source>
</evidence>
<evidence type="ECO:0000256" key="4">
    <source>
        <dbReference type="SAM" id="MobiDB-lite"/>
    </source>
</evidence>
<evidence type="ECO:0000305" key="5"/>
<proteinExistence type="inferred from homology"/>
<gene>
    <name type="ordered locus">VV2_1146</name>
</gene>
<name>COLA_VIBVU</name>
<organism>
    <name type="scientific">Vibrio vulnificus (strain CMCP6)</name>
    <dbReference type="NCBI Taxonomy" id="216895"/>
    <lineage>
        <taxon>Bacteria</taxon>
        <taxon>Pseudomonadati</taxon>
        <taxon>Pseudomonadota</taxon>
        <taxon>Gammaproteobacteria</taxon>
        <taxon>Vibrionales</taxon>
        <taxon>Vibrionaceae</taxon>
        <taxon>Vibrio</taxon>
    </lineage>
</organism>
<keyword id="KW-0177">Collagen degradation</keyword>
<keyword id="KW-0378">Hydrolase</keyword>
<keyword id="KW-0479">Metal-binding</keyword>
<keyword id="KW-0482">Metalloprotease</keyword>
<keyword id="KW-0645">Protease</keyword>
<keyword id="KW-0964">Secreted</keyword>
<keyword id="KW-0732">Signal</keyword>
<keyword id="KW-0862">Zinc</keyword>
<keyword id="KW-0865">Zymogen</keyword>
<feature type="signal peptide" evidence="2">
    <location>
        <begin position="1"/>
        <end position="27"/>
    </location>
</feature>
<feature type="chain" id="PRO_0000028680" description="Microbial collagenase">
    <location>
        <begin position="28"/>
        <end position="807"/>
    </location>
</feature>
<feature type="region of interest" description="Disordered" evidence="4">
    <location>
        <begin position="562"/>
        <end position="585"/>
    </location>
</feature>
<feature type="active site" evidence="3">
    <location>
        <position position="435"/>
    </location>
</feature>
<feature type="binding site" evidence="3">
    <location>
        <position position="434"/>
    </location>
    <ligand>
        <name>Zn(2+)</name>
        <dbReference type="ChEBI" id="CHEBI:29105"/>
        <note>catalytic</note>
    </ligand>
</feature>
<feature type="binding site" evidence="3">
    <location>
        <position position="438"/>
    </location>
    <ligand>
        <name>Zn(2+)</name>
        <dbReference type="ChEBI" id="CHEBI:29105"/>
        <note>catalytic</note>
    </ligand>
</feature>
<accession>Q8D4Y9</accession>
<dbReference type="EC" id="3.4.24.3"/>
<dbReference type="EMBL" id="AE016796">
    <property type="protein sequence ID" value="AAO08047.1"/>
    <property type="molecule type" value="Genomic_DNA"/>
</dbReference>
<dbReference type="RefSeq" id="WP_011082042.1">
    <property type="nucleotide sequence ID" value="NC_004460.2"/>
</dbReference>
<dbReference type="SMR" id="Q8D4Y9"/>
<dbReference type="MEROPS" id="M09.004"/>
<dbReference type="KEGG" id="vvu:VV2_1146"/>
<dbReference type="HOGENOM" id="CLU_011878_0_0_6"/>
<dbReference type="Proteomes" id="UP000002275">
    <property type="component" value="Chromosome 2"/>
</dbReference>
<dbReference type="GO" id="GO:0005576">
    <property type="term" value="C:extracellular region"/>
    <property type="evidence" value="ECO:0007669"/>
    <property type="project" value="UniProtKB-SubCell"/>
</dbReference>
<dbReference type="GO" id="GO:0004222">
    <property type="term" value="F:metalloendopeptidase activity"/>
    <property type="evidence" value="ECO:0007669"/>
    <property type="project" value="UniProtKB-EC"/>
</dbReference>
<dbReference type="GO" id="GO:0008270">
    <property type="term" value="F:zinc ion binding"/>
    <property type="evidence" value="ECO:0007669"/>
    <property type="project" value="InterPro"/>
</dbReference>
<dbReference type="GO" id="GO:0030574">
    <property type="term" value="P:collagen catabolic process"/>
    <property type="evidence" value="ECO:0007669"/>
    <property type="project" value="UniProtKB-KW"/>
</dbReference>
<dbReference type="GO" id="GO:0006508">
    <property type="term" value="P:proteolysis"/>
    <property type="evidence" value="ECO:0007669"/>
    <property type="project" value="UniProtKB-KW"/>
</dbReference>
<dbReference type="Gene3D" id="1.10.390.20">
    <property type="match status" value="1"/>
</dbReference>
<dbReference type="Gene3D" id="2.60.120.380">
    <property type="match status" value="2"/>
</dbReference>
<dbReference type="Gene3D" id="3.40.30.160">
    <property type="entry name" value="Collagenase ColT, N-terminal domain"/>
    <property type="match status" value="1"/>
</dbReference>
<dbReference type="InterPro" id="IPR007280">
    <property type="entry name" value="Peptidase_C_arc/bac"/>
</dbReference>
<dbReference type="InterPro" id="IPR013661">
    <property type="entry name" value="Peptidase_M9_N_dom"/>
</dbReference>
<dbReference type="InterPro" id="IPR002169">
    <property type="entry name" value="Peptidase_M9A/M9B"/>
</dbReference>
<dbReference type="PANTHER" id="PTHR13062">
    <property type="entry name" value="COLLAGENASE"/>
    <property type="match status" value="1"/>
</dbReference>
<dbReference type="PANTHER" id="PTHR13062:SF9">
    <property type="entry name" value="MICROBIAL COLLAGENASE"/>
    <property type="match status" value="1"/>
</dbReference>
<dbReference type="Pfam" id="PF01752">
    <property type="entry name" value="Peptidase_M9"/>
    <property type="match status" value="1"/>
</dbReference>
<dbReference type="Pfam" id="PF08453">
    <property type="entry name" value="Peptidase_M9_N"/>
    <property type="match status" value="1"/>
</dbReference>
<dbReference type="Pfam" id="PF04151">
    <property type="entry name" value="PPC"/>
    <property type="match status" value="1"/>
</dbReference>
<dbReference type="PRINTS" id="PR00931">
    <property type="entry name" value="MICOLLPTASE"/>
</dbReference>
<dbReference type="PROSITE" id="PS00142">
    <property type="entry name" value="ZINC_PROTEASE"/>
    <property type="match status" value="1"/>
</dbReference>